<evidence type="ECO:0000250" key="1"/>
<evidence type="ECO:0000255" key="2">
    <source>
        <dbReference type="PROSITE-ProRule" id="PRU00089"/>
    </source>
</evidence>
<evidence type="ECO:0000256" key="3">
    <source>
        <dbReference type="SAM" id="MobiDB-lite"/>
    </source>
</evidence>
<evidence type="ECO:0000305" key="4"/>
<evidence type="ECO:0000312" key="5">
    <source>
        <dbReference type="EMBL" id="AAH82945.1"/>
    </source>
</evidence>
<organism>
    <name type="scientific">Xenopus laevis</name>
    <name type="common">African clawed frog</name>
    <dbReference type="NCBI Taxonomy" id="8355"/>
    <lineage>
        <taxon>Eukaryota</taxon>
        <taxon>Metazoa</taxon>
        <taxon>Chordata</taxon>
        <taxon>Craniata</taxon>
        <taxon>Vertebrata</taxon>
        <taxon>Euteleostomi</taxon>
        <taxon>Amphibia</taxon>
        <taxon>Batrachia</taxon>
        <taxon>Anura</taxon>
        <taxon>Pipoidea</taxon>
        <taxon>Pipidae</taxon>
        <taxon>Xenopodinae</taxon>
        <taxon>Xenopus</taxon>
        <taxon>Xenopus</taxon>
    </lineage>
</organism>
<feature type="chain" id="PRO_0000247729" description="Forkhead box protein I2-B">
    <location>
        <begin position="1"/>
        <end position="367"/>
    </location>
</feature>
<feature type="DNA-binding region" description="Fork-head" evidence="2">
    <location>
        <begin position="124"/>
        <end position="218"/>
    </location>
</feature>
<feature type="region of interest" description="Disordered" evidence="3">
    <location>
        <begin position="31"/>
        <end position="51"/>
    </location>
</feature>
<feature type="region of interest" description="Disordered" evidence="3">
    <location>
        <begin position="224"/>
        <end position="254"/>
    </location>
</feature>
<feature type="compositionally biased region" description="Low complexity" evidence="3">
    <location>
        <begin position="31"/>
        <end position="40"/>
    </location>
</feature>
<name>FXI2B_XENLA</name>
<proteinExistence type="evidence at transcript level"/>
<reference evidence="5" key="1">
    <citation type="submission" date="2004-09" db="EMBL/GenBank/DDBJ databases">
        <authorList>
            <consortium name="NIH - Xenopus Gene Collection (XGC) project"/>
        </authorList>
    </citation>
    <scope>NUCLEOTIDE SEQUENCE [LARGE SCALE MRNA]</scope>
    <source>
        <tissue evidence="5">Oocyte</tissue>
    </source>
</reference>
<dbReference type="EMBL" id="BC082945">
    <property type="protein sequence ID" value="AAH82945.1"/>
    <property type="status" value="ALT_INIT"/>
    <property type="molecule type" value="mRNA"/>
</dbReference>
<dbReference type="RefSeq" id="NP_001088107.1">
    <property type="nucleotide sequence ID" value="NM_001094638.1"/>
</dbReference>
<dbReference type="SMR" id="Q63ZH2"/>
<dbReference type="DNASU" id="494806"/>
<dbReference type="GeneID" id="494806"/>
<dbReference type="KEGG" id="xla:494806"/>
<dbReference type="AGR" id="Xenbase:XB-GENE-6255082"/>
<dbReference type="CTD" id="494806"/>
<dbReference type="Xenbase" id="XB-GENE-6255082">
    <property type="gene designation" value="foxi2.L"/>
</dbReference>
<dbReference type="OrthoDB" id="5402974at2759"/>
<dbReference type="Proteomes" id="UP000186698">
    <property type="component" value="Chromosome 7L"/>
</dbReference>
<dbReference type="Bgee" id="494806">
    <property type="expression patterns" value="Expressed in blastula and 7 other cell types or tissues"/>
</dbReference>
<dbReference type="GO" id="GO:0005634">
    <property type="term" value="C:nucleus"/>
    <property type="evidence" value="ECO:0000250"/>
    <property type="project" value="UniProtKB"/>
</dbReference>
<dbReference type="GO" id="GO:0000981">
    <property type="term" value="F:DNA-binding transcription factor activity, RNA polymerase II-specific"/>
    <property type="evidence" value="ECO:0000318"/>
    <property type="project" value="GO_Central"/>
</dbReference>
<dbReference type="GO" id="GO:0000978">
    <property type="term" value="F:RNA polymerase II cis-regulatory region sequence-specific DNA binding"/>
    <property type="evidence" value="ECO:0000318"/>
    <property type="project" value="GO_Central"/>
</dbReference>
<dbReference type="GO" id="GO:0009653">
    <property type="term" value="P:anatomical structure morphogenesis"/>
    <property type="evidence" value="ECO:0000318"/>
    <property type="project" value="GO_Central"/>
</dbReference>
<dbReference type="GO" id="GO:0030154">
    <property type="term" value="P:cell differentiation"/>
    <property type="evidence" value="ECO:0000318"/>
    <property type="project" value="GO_Central"/>
</dbReference>
<dbReference type="GO" id="GO:0006357">
    <property type="term" value="P:regulation of transcription by RNA polymerase II"/>
    <property type="evidence" value="ECO:0000318"/>
    <property type="project" value="GO_Central"/>
</dbReference>
<dbReference type="FunFam" id="1.10.10.10:FF:000016">
    <property type="entry name" value="Forkhead box protein I1"/>
    <property type="match status" value="1"/>
</dbReference>
<dbReference type="Gene3D" id="1.10.10.10">
    <property type="entry name" value="Winged helix-like DNA-binding domain superfamily/Winged helix DNA-binding domain"/>
    <property type="match status" value="1"/>
</dbReference>
<dbReference type="InterPro" id="IPR001766">
    <property type="entry name" value="Fork_head_dom"/>
</dbReference>
<dbReference type="InterPro" id="IPR050211">
    <property type="entry name" value="FOX_domain-containing"/>
</dbReference>
<dbReference type="InterPro" id="IPR030456">
    <property type="entry name" value="TF_fork_head_CS_2"/>
</dbReference>
<dbReference type="InterPro" id="IPR036388">
    <property type="entry name" value="WH-like_DNA-bd_sf"/>
</dbReference>
<dbReference type="InterPro" id="IPR036390">
    <property type="entry name" value="WH_DNA-bd_sf"/>
</dbReference>
<dbReference type="PANTHER" id="PTHR11829">
    <property type="entry name" value="FORKHEAD BOX PROTEIN"/>
    <property type="match status" value="1"/>
</dbReference>
<dbReference type="PANTHER" id="PTHR11829:SF397">
    <property type="entry name" value="FORKHEAD BOX PROTEIN I2"/>
    <property type="match status" value="1"/>
</dbReference>
<dbReference type="Pfam" id="PF00250">
    <property type="entry name" value="Forkhead"/>
    <property type="match status" value="1"/>
</dbReference>
<dbReference type="PRINTS" id="PR00053">
    <property type="entry name" value="FORKHEAD"/>
</dbReference>
<dbReference type="SMART" id="SM00339">
    <property type="entry name" value="FH"/>
    <property type="match status" value="1"/>
</dbReference>
<dbReference type="SUPFAM" id="SSF46785">
    <property type="entry name" value="Winged helix' DNA-binding domain"/>
    <property type="match status" value="1"/>
</dbReference>
<dbReference type="PROSITE" id="PS00658">
    <property type="entry name" value="FORK_HEAD_2"/>
    <property type="match status" value="1"/>
</dbReference>
<dbReference type="PROSITE" id="PS50039">
    <property type="entry name" value="FORK_HEAD_3"/>
    <property type="match status" value="1"/>
</dbReference>
<keyword id="KW-0010">Activator</keyword>
<keyword id="KW-0238">DNA-binding</keyword>
<keyword id="KW-0539">Nucleus</keyword>
<keyword id="KW-1185">Reference proteome</keyword>
<keyword id="KW-0804">Transcription</keyword>
<keyword id="KW-0805">Transcription regulation</keyword>
<comment type="function">
    <text evidence="1">Possible transcriptional activator.</text>
</comment>
<comment type="subcellular location">
    <subcellularLocation>
        <location evidence="4">Nucleus</location>
    </subcellularLocation>
</comment>
<comment type="sequence caution" evidence="4">
    <conflict type="erroneous initiation">
        <sequence resource="EMBL-CDS" id="AAH82945"/>
    </conflict>
</comment>
<protein>
    <recommendedName>
        <fullName>Forkhead box protein I2-B</fullName>
    </recommendedName>
    <alternativeName>
        <fullName>XlFoxI2-B</fullName>
    </alternativeName>
</protein>
<sequence>MNTFGQQTSNPHAQDLLDMAKYYDHFNHYHQQQNQQLPQRPAAPPAPGYGLNEFSPPTANPYLWLNGPAINSSPYLNGGSGSPYFPTGYGGGQRQFLPPSSGFGVADFPWLSIPNQADLLKMVRPPYSYSSLIAMSIQNTPDKKLTLSQIYNYVAENFPFYKKSKAGWQNSIRHNLSLNDCFKKVARDDNDPGKGNYWTLDPNCEKMFDNGNFRRKRKRKSEIVGAGFDEESNEDKKPLALKSLGPDSPGGASVVLEQSSYTAPEGKNKSPVGSVARDSSHCFTNFASNMNALINGRAPRQFSAGHGDFSNSRHYLAELASCPISSPPISEAQTKVACYPSKQQNSLCTSVLNPFSLNHVYSREGEV</sequence>
<gene>
    <name type="primary">foxi2-b</name>
</gene>
<accession>Q63ZH2</accession>